<reference key="1">
    <citation type="journal article" date="1999" name="J. Appl. Microbiol.">
        <title>Sequence, assembly and analysis of pXO1 and pXO2.</title>
        <authorList>
            <person name="Okinaka R.T."/>
            <person name="Cloud K."/>
            <person name="Hampton O."/>
            <person name="Hoffmaster A."/>
            <person name="Hill K.K."/>
            <person name="Keim P."/>
            <person name="Koehler T."/>
            <person name="Lamke G."/>
            <person name="Kumano S."/>
            <person name="Manter D."/>
            <person name="Martinez Y."/>
            <person name="Ricke D."/>
            <person name="Svensson R."/>
            <person name="Jackson P.J."/>
        </authorList>
    </citation>
    <scope>NUCLEOTIDE SEQUENCE [GENOMIC DNA]</scope>
    <source>
        <strain>Pasteur</strain>
    </source>
</reference>
<reference key="2">
    <citation type="journal article" date="2002" name="Science">
        <title>Comparative genome sequencing for discovery of novel polymorphisms in Bacillus anthracis.</title>
        <authorList>
            <person name="Read T.D."/>
            <person name="Salzberg S.L."/>
            <person name="Pop M."/>
            <person name="Shumway M.F."/>
            <person name="Umayam L."/>
            <person name="Jiang L."/>
            <person name="Holtzapple E."/>
            <person name="Busch J.D."/>
            <person name="Smith K.L."/>
            <person name="Schupp J.M."/>
            <person name="Solomon D."/>
            <person name="Keim P."/>
            <person name="Fraser C.M."/>
        </authorList>
    </citation>
    <scope>NUCLEOTIDE SEQUENCE [GENOMIC DNA]</scope>
    <source>
        <strain>Ames / isolate Florida / A2012</strain>
    </source>
</reference>
<reference key="3">
    <citation type="journal article" date="2009" name="J. Bacteriol.">
        <title>The complete genome sequence of Bacillus anthracis Ames 'Ancestor'.</title>
        <authorList>
            <person name="Ravel J."/>
            <person name="Jiang L."/>
            <person name="Stanley S.T."/>
            <person name="Wilson M.R."/>
            <person name="Decker R.S."/>
            <person name="Read T.D."/>
            <person name="Worsham P."/>
            <person name="Keim P.S."/>
            <person name="Salzberg S.L."/>
            <person name="Fraser-Liggett C.M."/>
            <person name="Rasko D.A."/>
        </authorList>
    </citation>
    <scope>NUCLEOTIDE SEQUENCE [LARGE SCALE GENOMIC DNA]</scope>
    <source>
        <strain>Ames ancestor</strain>
    </source>
</reference>
<evidence type="ECO:0000256" key="1">
    <source>
        <dbReference type="SAM" id="MobiDB-lite"/>
    </source>
</evidence>
<protein>
    <recommendedName>
        <fullName>Uncharacterized protein pXO2-78/BXB0107/GBAA_pXO2_0107</fullName>
    </recommendedName>
</protein>
<proteinExistence type="predicted"/>
<name>Y6607_BACAN</name>
<geneLocation type="plasmid">
    <name>pXO2</name>
</geneLocation>
<sequence length="344" mass="40462">MEQQKKNIKRYTEEEIEKAASLDIVDYCMQNDIPVKPDSERYYRLTEHDSLIIDRKKNQFYWNSRGVNGNIIKFVQEVEDASFPGAMQRLLDGEQDYEKASEITFVSEPYDYEHFEQKEVSRFDRAREYLIEERKIDPQVVDALHNKGLIKQDKYNNVLFLWKDRETGAVMGGSEQGVVKSDKYKRGAWKSIQKNSTANYGFNVLNGEPRNLKFYESDIDLLSYATLHKHNLKDTHLISMEGLKPQVIFNYYMKACERIGDVPDSLSLCVDNDKAGKAFVERLIHFRYEKNDGSIVAFKPEYPQAPSEEKKWDWNDECKRVAKQQEQREQGRRAAYLQQRGMER</sequence>
<gene>
    <name type="ordered locus">pXO2-78</name>
    <name type="ordered locus">BXB0107</name>
    <name type="ordered locus">GBAA_pXO2_0107</name>
</gene>
<organism>
    <name type="scientific">Bacillus anthracis</name>
    <dbReference type="NCBI Taxonomy" id="1392"/>
    <lineage>
        <taxon>Bacteria</taxon>
        <taxon>Bacillati</taxon>
        <taxon>Bacillota</taxon>
        <taxon>Bacilli</taxon>
        <taxon>Bacillales</taxon>
        <taxon>Bacillaceae</taxon>
        <taxon>Bacillus</taxon>
        <taxon>Bacillus cereus group</taxon>
    </lineage>
</organism>
<feature type="chain" id="PRO_0000216863" description="Uncharacterized protein pXO2-78/BXB0107/GBAA_pXO2_0107">
    <location>
        <begin position="1"/>
        <end position="344"/>
    </location>
</feature>
<feature type="region of interest" description="Disordered" evidence="1">
    <location>
        <begin position="323"/>
        <end position="344"/>
    </location>
</feature>
<feature type="compositionally biased region" description="Basic and acidic residues" evidence="1">
    <location>
        <begin position="323"/>
        <end position="332"/>
    </location>
</feature>
<accession>Q9RMV7</accession>
<accession>Q7CM76</accession>
<dbReference type="EMBL" id="AF188935">
    <property type="protein sequence ID" value="AAF13682.1"/>
    <property type="molecule type" value="Genomic_DNA"/>
</dbReference>
<dbReference type="EMBL" id="AE011191">
    <property type="protein sequence ID" value="AAM26257.1"/>
    <property type="molecule type" value="Genomic_DNA"/>
</dbReference>
<dbReference type="EMBL" id="AE017335">
    <property type="protein sequence ID" value="AAT35519.1"/>
    <property type="molecule type" value="Genomic_DNA"/>
</dbReference>
<dbReference type="RefSeq" id="NP_053232.1">
    <property type="nucleotide sequence ID" value="NC_002146.1"/>
</dbReference>
<dbReference type="RefSeq" id="WP_000437708.1">
    <property type="nucleotide sequence ID" value="NZ_VTZL01000009.1"/>
</dbReference>
<dbReference type="SMR" id="Q9RMV7"/>
<dbReference type="GeneID" id="45025393"/>
<dbReference type="KEGG" id="bar:GBAA_pXO2_0107"/>
<dbReference type="HOGENOM" id="CLU_027621_0_0_9"/>
<dbReference type="OMA" id="CSLARYY"/>
<dbReference type="Proteomes" id="UP000000594">
    <property type="component" value="Plasmid pXO2"/>
</dbReference>
<dbReference type="GO" id="GO:0003677">
    <property type="term" value="F:DNA binding"/>
    <property type="evidence" value="ECO:0007669"/>
    <property type="project" value="InterPro"/>
</dbReference>
<dbReference type="GO" id="GO:0008270">
    <property type="term" value="F:zinc ion binding"/>
    <property type="evidence" value="ECO:0007669"/>
    <property type="project" value="InterPro"/>
</dbReference>
<dbReference type="GO" id="GO:0006260">
    <property type="term" value="P:DNA replication"/>
    <property type="evidence" value="ECO:0007669"/>
    <property type="project" value="InterPro"/>
</dbReference>
<dbReference type="Gene3D" id="3.40.1360.10">
    <property type="match status" value="1"/>
</dbReference>
<dbReference type="Gene3D" id="3.90.580.10">
    <property type="entry name" value="Zinc finger, CHC2-type domain"/>
    <property type="match status" value="1"/>
</dbReference>
<dbReference type="InterPro" id="IPR036977">
    <property type="entry name" value="DNA_primase_Znf_CHC2"/>
</dbReference>
<dbReference type="InterPro" id="IPR025054">
    <property type="entry name" value="DUF3991"/>
</dbReference>
<dbReference type="Pfam" id="PF13154">
    <property type="entry name" value="DUF3991"/>
    <property type="match status" value="1"/>
</dbReference>
<dbReference type="Pfam" id="PF13155">
    <property type="entry name" value="Toprim_2"/>
    <property type="match status" value="1"/>
</dbReference>
<dbReference type="SUPFAM" id="SSF57783">
    <property type="entry name" value="Zinc beta-ribbon"/>
    <property type="match status" value="1"/>
</dbReference>
<keyword id="KW-0614">Plasmid</keyword>
<keyword id="KW-1185">Reference proteome</keyword>